<feature type="chain" id="PRO_0000046581" description="Putative low molecular weight protein-tyrosine-phosphatase slr0328">
    <location>
        <begin position="1"/>
        <end position="157"/>
    </location>
</feature>
<feature type="active site" description="Nucleophile" evidence="1">
    <location>
        <position position="7"/>
    </location>
</feature>
<feature type="active site" evidence="1">
    <location>
        <position position="13"/>
    </location>
</feature>
<feature type="active site" description="Proton donor" evidence="1">
    <location>
        <position position="124"/>
    </location>
</feature>
<feature type="strand" evidence="3">
    <location>
        <begin position="4"/>
        <end position="12"/>
    </location>
</feature>
<feature type="helix" evidence="3">
    <location>
        <begin position="13"/>
        <end position="24"/>
    </location>
</feature>
<feature type="strand" evidence="3">
    <location>
        <begin position="37"/>
        <end position="41"/>
    </location>
</feature>
<feature type="turn" evidence="3">
    <location>
        <begin position="44"/>
        <end position="47"/>
    </location>
</feature>
<feature type="helix" evidence="3">
    <location>
        <begin position="52"/>
        <end position="55"/>
    </location>
</feature>
<feature type="strand" evidence="3">
    <location>
        <begin position="85"/>
        <end position="87"/>
    </location>
</feature>
<feature type="helix" evidence="3">
    <location>
        <begin position="88"/>
        <end position="91"/>
    </location>
</feature>
<feature type="helix" evidence="3">
    <location>
        <begin position="130"/>
        <end position="143"/>
    </location>
</feature>
<proteinExistence type="evidence at protein level"/>
<dbReference type="EC" id="3.1.3.48"/>
<dbReference type="EMBL" id="BA000022">
    <property type="protein sequence ID" value="BAA10030.1"/>
    <property type="molecule type" value="Genomic_DNA"/>
</dbReference>
<dbReference type="PIR" id="S76052">
    <property type="entry name" value="S76052"/>
</dbReference>
<dbReference type="PDB" id="5O7B">
    <property type="method" value="X-ray"/>
    <property type="resolution" value="2.28 A"/>
    <property type="chains" value="A=2-157"/>
</dbReference>
<dbReference type="PDBsum" id="5O7B"/>
<dbReference type="SMR" id="Q55535"/>
<dbReference type="FunCoup" id="Q55535">
    <property type="interactions" value="379"/>
</dbReference>
<dbReference type="STRING" id="1148.gene:10499522"/>
<dbReference type="PaxDb" id="1148-1001408"/>
<dbReference type="EnsemblBacteria" id="BAA10030">
    <property type="protein sequence ID" value="BAA10030"/>
    <property type="gene ID" value="BAA10030"/>
</dbReference>
<dbReference type="KEGG" id="syn:slr0328"/>
<dbReference type="eggNOG" id="COG0394">
    <property type="taxonomic scope" value="Bacteria"/>
</dbReference>
<dbReference type="InParanoid" id="Q55535"/>
<dbReference type="PhylomeDB" id="Q55535"/>
<dbReference type="Proteomes" id="UP000001425">
    <property type="component" value="Chromosome"/>
</dbReference>
<dbReference type="GO" id="GO:0004725">
    <property type="term" value="F:protein tyrosine phosphatase activity"/>
    <property type="evidence" value="ECO:0000318"/>
    <property type="project" value="GO_Central"/>
</dbReference>
<dbReference type="CDD" id="cd16343">
    <property type="entry name" value="LMWPTP"/>
    <property type="match status" value="1"/>
</dbReference>
<dbReference type="FunFam" id="3.40.50.2300:FF:000113">
    <property type="entry name" value="Low molecular weight protein-tyrosine-phosphatase"/>
    <property type="match status" value="1"/>
</dbReference>
<dbReference type="Gene3D" id="3.40.50.2300">
    <property type="match status" value="1"/>
</dbReference>
<dbReference type="InterPro" id="IPR052995">
    <property type="entry name" value="LMW-PTP"/>
</dbReference>
<dbReference type="InterPro" id="IPR023485">
    <property type="entry name" value="Ptyr_pPase"/>
</dbReference>
<dbReference type="InterPro" id="IPR036196">
    <property type="entry name" value="Ptyr_pPase_sf"/>
</dbReference>
<dbReference type="InterPro" id="IPR017867">
    <property type="entry name" value="Tyr_phospatase_low_mol_wt"/>
</dbReference>
<dbReference type="PANTHER" id="PTHR47439:SF1">
    <property type="entry name" value="ACID PHOSPHATASE"/>
    <property type="match status" value="1"/>
</dbReference>
<dbReference type="PANTHER" id="PTHR47439">
    <property type="entry name" value="LOW MOLECULAR WEIGHT PHOSPHOTYROSINE PROTEIN PHOSPHATASE-RELATED"/>
    <property type="match status" value="1"/>
</dbReference>
<dbReference type="Pfam" id="PF01451">
    <property type="entry name" value="LMWPc"/>
    <property type="match status" value="1"/>
</dbReference>
<dbReference type="PRINTS" id="PR00719">
    <property type="entry name" value="LMWPTPASE"/>
</dbReference>
<dbReference type="SMART" id="SM00226">
    <property type="entry name" value="LMWPc"/>
    <property type="match status" value="1"/>
</dbReference>
<dbReference type="SUPFAM" id="SSF52788">
    <property type="entry name" value="Phosphotyrosine protein phosphatases I"/>
    <property type="match status" value="1"/>
</dbReference>
<organism>
    <name type="scientific">Synechocystis sp. (strain ATCC 27184 / PCC 6803 / Kazusa)</name>
    <dbReference type="NCBI Taxonomy" id="1111708"/>
    <lineage>
        <taxon>Bacteria</taxon>
        <taxon>Bacillati</taxon>
        <taxon>Cyanobacteriota</taxon>
        <taxon>Cyanophyceae</taxon>
        <taxon>Synechococcales</taxon>
        <taxon>Merismopediaceae</taxon>
        <taxon>Synechocystis</taxon>
    </lineage>
</organism>
<comment type="catalytic activity">
    <reaction>
        <text>O-phospho-L-tyrosyl-[protein] + H2O = L-tyrosyl-[protein] + phosphate</text>
        <dbReference type="Rhea" id="RHEA:10684"/>
        <dbReference type="Rhea" id="RHEA-COMP:10136"/>
        <dbReference type="Rhea" id="RHEA-COMP:20101"/>
        <dbReference type="ChEBI" id="CHEBI:15377"/>
        <dbReference type="ChEBI" id="CHEBI:43474"/>
        <dbReference type="ChEBI" id="CHEBI:46858"/>
        <dbReference type="ChEBI" id="CHEBI:61978"/>
        <dbReference type="EC" id="3.1.3.48"/>
    </reaction>
</comment>
<comment type="similarity">
    <text evidence="2">Belongs to the low molecular weight phosphotyrosine protein phosphatase family.</text>
</comment>
<name>Y328_SYNY3</name>
<evidence type="ECO:0000250" key="1">
    <source>
        <dbReference type="UniProtKB" id="P11064"/>
    </source>
</evidence>
<evidence type="ECO:0000305" key="2"/>
<evidence type="ECO:0007829" key="3">
    <source>
        <dbReference type="PDB" id="5O7B"/>
    </source>
</evidence>
<accession>Q55535</accession>
<sequence length="157" mass="17470">MKLLFVCLGNICRSPAAENIMNAQIDQAGLGAKIVCDSAGTSSYHVGDSPDRRMTESLKKRGYRVQGRARQFFPEDFAEFDLILAMDGDNYRNILAQDPAGQYHHKVKMICDYTEKFGDREVPDPYYGGQAGFEHVIDLLEDACGNLLTSLGKELVN</sequence>
<gene>
    <name type="ordered locus">slr0328</name>
</gene>
<reference key="1">
    <citation type="journal article" date="1995" name="DNA Res.">
        <title>Sequence analysis of the genome of the unicellular cyanobacterium Synechocystis sp. strain PCC6803. I. Sequence features in the 1 Mb region from map positions 64% to 92% of the genome.</title>
        <authorList>
            <person name="Kaneko T."/>
            <person name="Tanaka A."/>
            <person name="Sato S."/>
            <person name="Kotani H."/>
            <person name="Sazuka T."/>
            <person name="Miyajima N."/>
            <person name="Sugiura M."/>
            <person name="Tabata S."/>
        </authorList>
    </citation>
    <scope>NUCLEOTIDE SEQUENCE [LARGE SCALE GENOMIC DNA]</scope>
    <source>
        <strain>ATCC 27184 / PCC 6803 / N-1</strain>
    </source>
</reference>
<reference key="2">
    <citation type="journal article" date="1996" name="DNA Res.">
        <title>Sequence analysis of the genome of the unicellular cyanobacterium Synechocystis sp. strain PCC6803. II. Sequence determination of the entire genome and assignment of potential protein-coding regions.</title>
        <authorList>
            <person name="Kaneko T."/>
            <person name="Sato S."/>
            <person name="Kotani H."/>
            <person name="Tanaka A."/>
            <person name="Asamizu E."/>
            <person name="Nakamura Y."/>
            <person name="Miyajima N."/>
            <person name="Hirosawa M."/>
            <person name="Sugiura M."/>
            <person name="Sasamoto S."/>
            <person name="Kimura T."/>
            <person name="Hosouchi T."/>
            <person name="Matsuno A."/>
            <person name="Muraki A."/>
            <person name="Nakazaki N."/>
            <person name="Naruo K."/>
            <person name="Okumura S."/>
            <person name="Shimpo S."/>
            <person name="Takeuchi C."/>
            <person name="Wada T."/>
            <person name="Watanabe A."/>
            <person name="Yamada M."/>
            <person name="Yasuda M."/>
            <person name="Tabata S."/>
        </authorList>
    </citation>
    <scope>NUCLEOTIDE SEQUENCE [LARGE SCALE GENOMIC DNA]</scope>
    <source>
        <strain>ATCC 27184 / PCC 6803 / Kazusa</strain>
    </source>
</reference>
<protein>
    <recommendedName>
        <fullName>Putative low molecular weight protein-tyrosine-phosphatase slr0328</fullName>
        <ecNumber>3.1.3.48</ecNumber>
    </recommendedName>
</protein>
<keyword id="KW-0002">3D-structure</keyword>
<keyword id="KW-0378">Hydrolase</keyword>
<keyword id="KW-0904">Protein phosphatase</keyword>
<keyword id="KW-1185">Reference proteome</keyword>